<reference key="1">
    <citation type="journal article" date="2000" name="Aust. J. Bot.">
        <title>Molecular systematics of the Leptospermum suballiance (Myrtaceae).</title>
        <authorList>
            <person name="O'Brien M.M."/>
            <person name="Quinn C.J."/>
            <person name="Wilson P.G."/>
        </authorList>
        <dbReference type="AGRICOLA" id="IND22905647"/>
    </citation>
    <scope>NUCLEOTIDE SEQUENCE [GENOMIC DNA]</scope>
</reference>
<evidence type="ECO:0000255" key="1">
    <source>
        <dbReference type="HAMAP-Rule" id="MF_01390"/>
    </source>
</evidence>
<feature type="chain" id="PRO_0000143450" description="Maturase K">
    <location>
        <begin position="1"/>
        <end position="503"/>
    </location>
</feature>
<keyword id="KW-0150">Chloroplast</keyword>
<keyword id="KW-0507">mRNA processing</keyword>
<keyword id="KW-0934">Plastid</keyword>
<keyword id="KW-0694">RNA-binding</keyword>
<keyword id="KW-0819">tRNA processing</keyword>
<comment type="function">
    <text evidence="1">Usually encoded in the trnK tRNA gene intron. Probably assists in splicing its own and other chloroplast group II introns.</text>
</comment>
<comment type="subcellular location">
    <subcellularLocation>
        <location>Plastid</location>
        <location>Chloroplast</location>
    </subcellularLocation>
</comment>
<comment type="similarity">
    <text evidence="1">Belongs to the intron maturase 2 family. MatK subfamily.</text>
</comment>
<gene>
    <name evidence="1" type="primary">matK</name>
</gene>
<proteinExistence type="inferred from homology"/>
<sequence>MEEFQGYLELDRSRXHYLLYPLLFREYIYALAHDHGLNRSMLFENAXDDXKSSSIIVKRLITRMYQQNPLIFSAKDSIQNQFFGHNKNLYSQILSEGFAVIVEXPISLRFLFSLERKEIAKSYNLRSIHSIFSFLEDKFTHLDYVSDVLIPYHIHLEILXQTLRYWVKDASSLHLLRFFLHDYWNSFITPKKHITFFLKGNPRLFLFLYNSHICEYEYIFPFLRNQSSHLRSTSSGIFXERIYFYVKIEHFVKVFFDNNFQCILWFLKDPFMHYVRYQAKFXVASKDTPLLMNKWKCYLVNLWQYHFSVWFQPGRIDINQLCKYSIYFLGYRSSVRLNSSVVRSQMLENLXLINNAMKKFETIVPIIPLIGSLYKSNFCNTFGHPISQPTRTHSSDSDIIDRFLRICRNLSHYHSGSSKKKSLYRVKYILRLSCVKTLARKHKRTVRTFVKRLGSEFLEEFLTEEEVVLSLIFPRTYSTSRRLYRGQIWXLDITSINDLANYE</sequence>
<name>MATK_KUNBA</name>
<organism>
    <name type="scientific">Kunzea baxteri</name>
    <name type="common">Scarlet kunzea</name>
    <dbReference type="NCBI Taxonomy" id="106042"/>
    <lineage>
        <taxon>Eukaryota</taxon>
        <taxon>Viridiplantae</taxon>
        <taxon>Streptophyta</taxon>
        <taxon>Embryophyta</taxon>
        <taxon>Tracheophyta</taxon>
        <taxon>Spermatophyta</taxon>
        <taxon>Magnoliopsida</taxon>
        <taxon>eudicotyledons</taxon>
        <taxon>Gunneridae</taxon>
        <taxon>Pentapetalae</taxon>
        <taxon>rosids</taxon>
        <taxon>malvids</taxon>
        <taxon>Myrtales</taxon>
        <taxon>Myrtaceae</taxon>
        <taxon>Myrtoideae</taxon>
        <taxon>Leptospermeae</taxon>
        <taxon>Kunzea</taxon>
    </lineage>
</organism>
<dbReference type="EMBL" id="AF184722">
    <property type="protein sequence ID" value="AAF05929.1"/>
    <property type="molecule type" value="Genomic_DNA"/>
</dbReference>
<dbReference type="GO" id="GO:0009507">
    <property type="term" value="C:chloroplast"/>
    <property type="evidence" value="ECO:0007669"/>
    <property type="project" value="UniProtKB-SubCell"/>
</dbReference>
<dbReference type="GO" id="GO:0003723">
    <property type="term" value="F:RNA binding"/>
    <property type="evidence" value="ECO:0007669"/>
    <property type="project" value="UniProtKB-KW"/>
</dbReference>
<dbReference type="GO" id="GO:0006397">
    <property type="term" value="P:mRNA processing"/>
    <property type="evidence" value="ECO:0007669"/>
    <property type="project" value="UniProtKB-KW"/>
</dbReference>
<dbReference type="GO" id="GO:0008380">
    <property type="term" value="P:RNA splicing"/>
    <property type="evidence" value="ECO:0007669"/>
    <property type="project" value="UniProtKB-UniRule"/>
</dbReference>
<dbReference type="GO" id="GO:0008033">
    <property type="term" value="P:tRNA processing"/>
    <property type="evidence" value="ECO:0007669"/>
    <property type="project" value="UniProtKB-KW"/>
</dbReference>
<dbReference type="HAMAP" id="MF_01390">
    <property type="entry name" value="MatK"/>
    <property type="match status" value="1"/>
</dbReference>
<dbReference type="InterPro" id="IPR024937">
    <property type="entry name" value="Domain_X"/>
</dbReference>
<dbReference type="InterPro" id="IPR002866">
    <property type="entry name" value="Maturase_MatK"/>
</dbReference>
<dbReference type="InterPro" id="IPR024942">
    <property type="entry name" value="Maturase_MatK_N"/>
</dbReference>
<dbReference type="PANTHER" id="PTHR34811">
    <property type="entry name" value="MATURASE K"/>
    <property type="match status" value="1"/>
</dbReference>
<dbReference type="PANTHER" id="PTHR34811:SF1">
    <property type="entry name" value="MATURASE K"/>
    <property type="match status" value="1"/>
</dbReference>
<dbReference type="Pfam" id="PF01348">
    <property type="entry name" value="Intron_maturas2"/>
    <property type="match status" value="1"/>
</dbReference>
<dbReference type="Pfam" id="PF01824">
    <property type="entry name" value="MatK_N"/>
    <property type="match status" value="1"/>
</dbReference>
<protein>
    <recommendedName>
        <fullName evidence="1">Maturase K</fullName>
    </recommendedName>
    <alternativeName>
        <fullName evidence="1">Intron maturase</fullName>
    </alternativeName>
</protein>
<accession>Q9TKC0</accession>
<geneLocation type="chloroplast"/>